<name>TRP6_ONCFA</name>
<feature type="peptide" id="PRO_0000395655" description="Tachykinin-related peptide 6" evidence="1">
    <location>
        <begin position="1"/>
        <end position="10"/>
    </location>
</feature>
<feature type="modified residue" description="Arginine amide" evidence="1">
    <location>
        <position position="10"/>
    </location>
</feature>
<comment type="subcellular location">
    <subcellularLocation>
        <location evidence="1 3">Secreted</location>
    </subcellularLocation>
</comment>
<comment type="tissue specificity">
    <text evidence="1">Expressed in the abdominal ventral nerve cord (at protein level).</text>
</comment>
<evidence type="ECO:0000269" key="1">
    <source>
    </source>
</evidence>
<evidence type="ECO:0000303" key="2">
    <source>
    </source>
</evidence>
<evidence type="ECO:0000305" key="3"/>
<protein>
    <recommendedName>
        <fullName evidence="2">Tachykinin-related peptide 6</fullName>
        <shortName evidence="2">TKRP-6</shortName>
    </recommendedName>
</protein>
<organism>
    <name type="scientific">Oncopeltus fasciatus</name>
    <name type="common">Large milkweed bug</name>
    <dbReference type="NCBI Taxonomy" id="7536"/>
    <lineage>
        <taxon>Eukaryota</taxon>
        <taxon>Metazoa</taxon>
        <taxon>Ecdysozoa</taxon>
        <taxon>Arthropoda</taxon>
        <taxon>Hexapoda</taxon>
        <taxon>Insecta</taxon>
        <taxon>Pterygota</taxon>
        <taxon>Neoptera</taxon>
        <taxon>Paraneoptera</taxon>
        <taxon>Hemiptera</taxon>
        <taxon>Heteroptera</taxon>
        <taxon>Panheteroptera</taxon>
        <taxon>Pentatomomorpha</taxon>
        <taxon>Lygaeoidea</taxon>
        <taxon>Lygaeidae</taxon>
        <taxon>Lygaeinae</taxon>
        <taxon>Oncopeltus</taxon>
    </lineage>
</organism>
<keyword id="KW-0027">Amidation</keyword>
<keyword id="KW-0903">Direct protein sequencing</keyword>
<keyword id="KW-0527">Neuropeptide</keyword>
<keyword id="KW-0964">Secreted</keyword>
<dbReference type="GO" id="GO:0005576">
    <property type="term" value="C:extracellular region"/>
    <property type="evidence" value="ECO:0007005"/>
    <property type="project" value="UniProtKB"/>
</dbReference>
<dbReference type="GO" id="GO:0007218">
    <property type="term" value="P:neuropeptide signaling pathway"/>
    <property type="evidence" value="ECO:0007669"/>
    <property type="project" value="UniProtKB-KW"/>
</dbReference>
<sequence>APSMGFMGMR</sequence>
<accession>P86581</accession>
<proteinExistence type="evidence at protein level"/>
<reference evidence="3" key="1">
    <citation type="journal article" date="2009" name="Peptides">
        <title>Neuropeptides in Heteroptera: identification of allatotropin-related peptide and tachykinin-related peptides using MALDI-TOF mass spectrometry.</title>
        <authorList>
            <person name="Neupert S."/>
            <person name="Russell W.K."/>
            <person name="Russell D.H."/>
            <person name="Lopez J.D. Jr."/>
            <person name="Predel R."/>
            <person name="Nachman R.J."/>
        </authorList>
    </citation>
    <scope>PROTEIN SEQUENCE</scope>
    <scope>SUBCELLULAR LOCATION</scope>
    <scope>TISSUE SPECIFICITY</scope>
    <scope>AMIDATION AT ARG-10</scope>
    <source>
        <tissue evidence="1">Abdominal nerve cord</tissue>
    </source>
</reference>